<name>ALKD_PSEA6</name>
<protein>
    <recommendedName>
        <fullName evidence="5">2-dehydro-3-deoxy-phosphogluconate aldolase</fullName>
        <ecNumber evidence="3">4.1.2.14</ecNumber>
    </recommendedName>
    <alternativeName>
        <fullName evidence="4">2-keto-3-deoxy-6-phospho-D-gluconate aldolase</fullName>
        <shortName evidence="4">KDPG aldolase</shortName>
    </alternativeName>
</protein>
<keyword id="KW-0119">Carbohydrate metabolism</keyword>
<keyword id="KW-0456">Lyase</keyword>
<keyword id="KW-0704">Schiff base</keyword>
<evidence type="ECO:0000250" key="1">
    <source>
        <dbReference type="UniProtKB" id="P00885"/>
    </source>
</evidence>
<evidence type="ECO:0000250" key="2">
    <source>
        <dbReference type="UniProtKB" id="P0A955"/>
    </source>
</evidence>
<evidence type="ECO:0000269" key="3">
    <source ref="2"/>
</evidence>
<evidence type="ECO:0000303" key="4">
    <source ref="2"/>
</evidence>
<evidence type="ECO:0000305" key="5"/>
<evidence type="ECO:0000312" key="6">
    <source>
        <dbReference type="EMBL" id="ABG39500.1"/>
    </source>
</evidence>
<proteinExistence type="evidence at protein level"/>
<organism>
    <name type="scientific">Pseudoalteromonas atlantica (strain T6c / ATCC BAA-1087)</name>
    <dbReference type="NCBI Taxonomy" id="3042615"/>
    <lineage>
        <taxon>Bacteria</taxon>
        <taxon>Pseudomonadati</taxon>
        <taxon>Pseudomonadota</taxon>
        <taxon>Gammaproteobacteria</taxon>
        <taxon>Alteromonadales</taxon>
        <taxon>Alteromonadaceae</taxon>
        <taxon>Paraglaciecola</taxon>
    </lineage>
</organism>
<feature type="chain" id="PRO_0000449957" description="2-dehydro-3-deoxy-phosphogluconate aldolase">
    <location>
        <begin position="1"/>
        <end position="215"/>
    </location>
</feature>
<feature type="active site" description="Proton acceptor" evidence="2">
    <location>
        <position position="46"/>
    </location>
</feature>
<feature type="active site" description="Schiff-base intermediate with substrate" evidence="2">
    <location>
        <position position="134"/>
    </location>
</feature>
<feature type="binding site" evidence="2">
    <location>
        <position position="50"/>
    </location>
    <ligand>
        <name>pyruvate</name>
        <dbReference type="ChEBI" id="CHEBI:15361"/>
    </ligand>
</feature>
<feature type="binding site" evidence="2">
    <location>
        <position position="74"/>
    </location>
    <ligand>
        <name>pyruvate</name>
        <dbReference type="ChEBI" id="CHEBI:15361"/>
    </ligand>
</feature>
<feature type="binding site" description="covalent" evidence="2">
    <location>
        <position position="134"/>
    </location>
    <ligand>
        <name>pyruvate</name>
        <dbReference type="ChEBI" id="CHEBI:15361"/>
    </ligand>
</feature>
<feature type="site" description="Plays a major role in determining the stereoselectivity" evidence="2">
    <location>
        <position position="162"/>
    </location>
</feature>
<sequence>MTKNWKVSSQDVFSQGPVVPVLVIKDVKHAVPLAKALIAGGIRVLEVTLRTEAALDVIKAIATEVPDAIIGAGTVTNAKQLAEVEAAGAMFAISPGMTSDLLDAGNKGGIALIPGISSISELMRGIDFGYTHFKFFPAEASGGVKAIKAIGGPFPDIAFCPTGGISPTNYLEYLSLPNVRCAGGSWLAPDDAVEAGDWDRITELAKQAVAGAAGI</sequence>
<reference key="1">
    <citation type="submission" date="2006-06" db="EMBL/GenBank/DDBJ databases">
        <title>Complete sequence of Pseudoalteromonas atlantica T6c.</title>
        <authorList>
            <consortium name="US DOE Joint Genome Institute"/>
            <person name="Copeland A."/>
            <person name="Lucas S."/>
            <person name="Lapidus A."/>
            <person name="Barry K."/>
            <person name="Detter J.C."/>
            <person name="Glavina del Rio T."/>
            <person name="Hammon N."/>
            <person name="Israni S."/>
            <person name="Dalin E."/>
            <person name="Tice H."/>
            <person name="Pitluck S."/>
            <person name="Saunders E."/>
            <person name="Brettin T."/>
            <person name="Bruce D."/>
            <person name="Han C."/>
            <person name="Tapia R."/>
            <person name="Gilna P."/>
            <person name="Schmutz J."/>
            <person name="Larimer F."/>
            <person name="Land M."/>
            <person name="Hauser L."/>
            <person name="Kyrpides N."/>
            <person name="Kim E."/>
            <person name="Karls A.C."/>
            <person name="Bartlett D."/>
            <person name="Higgins B.P."/>
            <person name="Richardson P."/>
        </authorList>
    </citation>
    <scope>NUCLEOTIDE SEQUENCE [LARGE SCALE GENOMIC DNA]</scope>
    <source>
        <strain>T6c / ATCC BAA-1087</strain>
    </source>
</reference>
<reference key="2">
    <citation type="journal article" date="2014" name="Biotechnol. Bioprocess Eng.">
        <title>Metabolic pathway of 3,6-anhydro-L-galactose in agar-degrading microorganisms.</title>
        <authorList>
            <person name="Lee S.B."/>
            <person name="Cho S.J."/>
            <person name="Kim J.A."/>
            <person name="Lee S.Y."/>
            <person name="Kim S.M."/>
            <person name="Lim H.S."/>
        </authorList>
    </citation>
    <scope>FUNCTION</scope>
    <scope>CATALYTIC ACTIVITY</scope>
    <source>
        <strain>T6c / ATCC BAA-1087</strain>
    </source>
</reference>
<comment type="function">
    <text evidence="2 3">Involved in the degradation of glucose via the Entner-Doudoroff pathway (By similarity). Catalyzes the reversible, stereospecific retro-aldol cleavage of 2-keto-3-deoxy-6-phosphogluconate (KDPG) to pyruvate and D-glyceraldehyde-3-phosphate (Ref.2). Involved in the degradation of 3,6-anhydro-L-galactose (L-AnG), which is the major monomeric sugar of red macroalgae (Ref.2). The cleavage of KDPG to glyceraldehyde 3-phosphate and pyruvate is the sixth step of this pathway (Ref.2).</text>
</comment>
<comment type="catalytic activity">
    <reaction evidence="3">
        <text>2-dehydro-3-deoxy-6-phospho-D-gluconate = D-glyceraldehyde 3-phosphate + pyruvate</text>
        <dbReference type="Rhea" id="RHEA:17089"/>
        <dbReference type="ChEBI" id="CHEBI:15361"/>
        <dbReference type="ChEBI" id="CHEBI:57569"/>
        <dbReference type="ChEBI" id="CHEBI:59776"/>
        <dbReference type="EC" id="4.1.2.14"/>
    </reaction>
</comment>
<comment type="pathway">
    <text evidence="2">Carbohydrate acid metabolism; 2-dehydro-3-deoxy-D-gluconate degradation; D-glyceraldehyde 3-phosphate and pyruvate from 2-dehydro-3-deoxy-D-gluconate: step 2/2.</text>
</comment>
<comment type="subunit">
    <text evidence="1">Homotrimer.</text>
</comment>
<comment type="similarity">
    <text evidence="5">Belongs to the KHG/KDPG aldolase family.</text>
</comment>
<dbReference type="EC" id="4.1.2.14" evidence="3"/>
<dbReference type="EMBL" id="CP000388">
    <property type="protein sequence ID" value="ABG39500.1"/>
    <property type="molecule type" value="Genomic_DNA"/>
</dbReference>
<dbReference type="RefSeq" id="WP_006990598.1">
    <property type="nucleotide sequence ID" value="NC_008228.1"/>
</dbReference>
<dbReference type="SMR" id="Q15X88"/>
<dbReference type="STRING" id="342610.Patl_0974"/>
<dbReference type="KEGG" id="pat:Patl_0974"/>
<dbReference type="eggNOG" id="COG0800">
    <property type="taxonomic scope" value="Bacteria"/>
</dbReference>
<dbReference type="HOGENOM" id="CLU_077795_1_1_6"/>
<dbReference type="OrthoDB" id="9805177at2"/>
<dbReference type="BioCyc" id="MetaCyc:MONOMER-19469"/>
<dbReference type="UniPathway" id="UPA00856">
    <property type="reaction ID" value="UER00829"/>
</dbReference>
<dbReference type="Proteomes" id="UP000001981">
    <property type="component" value="Chromosome"/>
</dbReference>
<dbReference type="GO" id="GO:0008675">
    <property type="term" value="F:2-dehydro-3-deoxy-phosphogluconate aldolase activity"/>
    <property type="evidence" value="ECO:0007669"/>
    <property type="project" value="UniProtKB-EC"/>
</dbReference>
<dbReference type="CDD" id="cd00452">
    <property type="entry name" value="KDPG_aldolase"/>
    <property type="match status" value="1"/>
</dbReference>
<dbReference type="Gene3D" id="3.20.20.70">
    <property type="entry name" value="Aldolase class I"/>
    <property type="match status" value="1"/>
</dbReference>
<dbReference type="InterPro" id="IPR000887">
    <property type="entry name" value="Aldlse_KDPG_KHG"/>
</dbReference>
<dbReference type="InterPro" id="IPR013785">
    <property type="entry name" value="Aldolase_TIM"/>
</dbReference>
<dbReference type="InterPro" id="IPR031337">
    <property type="entry name" value="KDPG/KHG_AS_1"/>
</dbReference>
<dbReference type="InterPro" id="IPR031338">
    <property type="entry name" value="KDPG/KHG_AS_2"/>
</dbReference>
<dbReference type="NCBIfam" id="TIGR01182">
    <property type="entry name" value="eda"/>
    <property type="match status" value="1"/>
</dbReference>
<dbReference type="NCBIfam" id="NF004325">
    <property type="entry name" value="PRK05718.1"/>
    <property type="match status" value="1"/>
</dbReference>
<dbReference type="PANTHER" id="PTHR30246:SF1">
    <property type="entry name" value="2-DEHYDRO-3-DEOXY-6-PHOSPHOGALACTONATE ALDOLASE-RELATED"/>
    <property type="match status" value="1"/>
</dbReference>
<dbReference type="PANTHER" id="PTHR30246">
    <property type="entry name" value="2-KETO-3-DEOXY-6-PHOSPHOGLUCONATE ALDOLASE"/>
    <property type="match status" value="1"/>
</dbReference>
<dbReference type="Pfam" id="PF01081">
    <property type="entry name" value="Aldolase"/>
    <property type="match status" value="1"/>
</dbReference>
<dbReference type="SUPFAM" id="SSF51569">
    <property type="entry name" value="Aldolase"/>
    <property type="match status" value="1"/>
</dbReference>
<dbReference type="PROSITE" id="PS00159">
    <property type="entry name" value="ALDOLASE_KDPG_KHG_1"/>
    <property type="match status" value="1"/>
</dbReference>
<dbReference type="PROSITE" id="PS00160">
    <property type="entry name" value="ALDOLASE_KDPG_KHG_2"/>
    <property type="match status" value="1"/>
</dbReference>
<accession>Q15X88</accession>
<gene>
    <name evidence="6" type="ordered locus">Patl_0974</name>
</gene>